<dbReference type="EMBL" id="CU329672">
    <property type="protein sequence ID" value="CAB53082.1"/>
    <property type="molecule type" value="Genomic_DNA"/>
</dbReference>
<dbReference type="PIR" id="T41083">
    <property type="entry name" value="T41083"/>
</dbReference>
<dbReference type="RefSeq" id="NP_587997.1">
    <property type="nucleotide sequence ID" value="NM_001022988.2"/>
</dbReference>
<dbReference type="SMR" id="Q9USM6"/>
<dbReference type="BioGRID" id="275355">
    <property type="interactions" value="6"/>
</dbReference>
<dbReference type="FunCoup" id="Q9USM6">
    <property type="interactions" value="355"/>
</dbReference>
<dbReference type="STRING" id="284812.Q9USM6"/>
<dbReference type="iPTMnet" id="Q9USM6"/>
<dbReference type="PaxDb" id="4896-SPCC16A11.10c.1"/>
<dbReference type="EnsemblFungi" id="SPCC16A11.10c.1">
    <property type="protein sequence ID" value="SPCC16A11.10c.1:pep"/>
    <property type="gene ID" value="SPCC16A11.10c"/>
</dbReference>
<dbReference type="GeneID" id="2538772"/>
<dbReference type="KEGG" id="spo:2538772"/>
<dbReference type="PomBase" id="SPCC16A11.10c">
    <property type="gene designation" value="oca8"/>
</dbReference>
<dbReference type="VEuPathDB" id="FungiDB:SPCC16A11.10c"/>
<dbReference type="eggNOG" id="KOG0537">
    <property type="taxonomic scope" value="Eukaryota"/>
</dbReference>
<dbReference type="HOGENOM" id="CLU_102602_3_2_1"/>
<dbReference type="InParanoid" id="Q9USM6"/>
<dbReference type="OMA" id="DIMMEHA"/>
<dbReference type="PhylomeDB" id="Q9USM6"/>
<dbReference type="Reactome" id="R-SPO-1660661">
    <property type="pathway name" value="Sphingolipid de novo biosynthesis"/>
</dbReference>
<dbReference type="Reactome" id="R-SPO-196836">
    <property type="pathway name" value="Vitamin C (ascorbate) metabolism"/>
</dbReference>
<dbReference type="Reactome" id="R-SPO-9609523">
    <property type="pathway name" value="Insertion of tail-anchored proteins into the endoplasmic reticulum membrane"/>
</dbReference>
<dbReference type="PRO" id="PR:Q9USM6"/>
<dbReference type="Proteomes" id="UP000002485">
    <property type="component" value="Chromosome III"/>
</dbReference>
<dbReference type="GO" id="GO:0005789">
    <property type="term" value="C:endoplasmic reticulum membrane"/>
    <property type="evidence" value="ECO:0000318"/>
    <property type="project" value="GO_Central"/>
</dbReference>
<dbReference type="GO" id="GO:0043231">
    <property type="term" value="C:intracellular membrane-bounded organelle"/>
    <property type="evidence" value="ECO:0000318"/>
    <property type="project" value="GO_Central"/>
</dbReference>
<dbReference type="GO" id="GO:0005739">
    <property type="term" value="C:mitochondrion"/>
    <property type="evidence" value="ECO:0007669"/>
    <property type="project" value="UniProtKB-SubCell"/>
</dbReference>
<dbReference type="GO" id="GO:0009055">
    <property type="term" value="F:electron transfer activity"/>
    <property type="evidence" value="ECO:0000266"/>
    <property type="project" value="PomBase"/>
</dbReference>
<dbReference type="GO" id="GO:0020037">
    <property type="term" value="F:heme binding"/>
    <property type="evidence" value="ECO:0000318"/>
    <property type="project" value="GO_Central"/>
</dbReference>
<dbReference type="GO" id="GO:0046872">
    <property type="term" value="F:metal ion binding"/>
    <property type="evidence" value="ECO:0007669"/>
    <property type="project" value="UniProtKB-KW"/>
</dbReference>
<dbReference type="GO" id="GO:0006696">
    <property type="term" value="P:ergosterol biosynthetic process"/>
    <property type="evidence" value="ECO:0000266"/>
    <property type="project" value="PomBase"/>
</dbReference>
<dbReference type="FunFam" id="3.10.120.10:FF:000002">
    <property type="entry name" value="Cytochrome b5 type B"/>
    <property type="match status" value="1"/>
</dbReference>
<dbReference type="Gene3D" id="3.10.120.10">
    <property type="entry name" value="Cytochrome b5-like heme/steroid binding domain"/>
    <property type="match status" value="1"/>
</dbReference>
<dbReference type="InterPro" id="IPR001199">
    <property type="entry name" value="Cyt_B5-like_heme/steroid-bd"/>
</dbReference>
<dbReference type="InterPro" id="IPR036400">
    <property type="entry name" value="Cyt_B5-like_heme/steroid_sf"/>
</dbReference>
<dbReference type="InterPro" id="IPR018506">
    <property type="entry name" value="Cyt_B5_heme-BS"/>
</dbReference>
<dbReference type="InterPro" id="IPR050668">
    <property type="entry name" value="Cytochrome_b5"/>
</dbReference>
<dbReference type="PANTHER" id="PTHR19359">
    <property type="entry name" value="CYTOCHROME B5"/>
    <property type="match status" value="1"/>
</dbReference>
<dbReference type="PANTHER" id="PTHR19359:SF147">
    <property type="entry name" value="CYTOCHROME B5 2-RELATED"/>
    <property type="match status" value="1"/>
</dbReference>
<dbReference type="Pfam" id="PF00173">
    <property type="entry name" value="Cyt-b5"/>
    <property type="match status" value="1"/>
</dbReference>
<dbReference type="PRINTS" id="PR00363">
    <property type="entry name" value="CYTOCHROMEB5"/>
</dbReference>
<dbReference type="SMART" id="SM01117">
    <property type="entry name" value="Cyt-b5"/>
    <property type="match status" value="1"/>
</dbReference>
<dbReference type="SUPFAM" id="SSF55856">
    <property type="entry name" value="Cytochrome b5-like heme/steroid binding domain"/>
    <property type="match status" value="1"/>
</dbReference>
<dbReference type="PROSITE" id="PS00191">
    <property type="entry name" value="CYTOCHROME_B5_1"/>
    <property type="match status" value="1"/>
</dbReference>
<dbReference type="PROSITE" id="PS50255">
    <property type="entry name" value="CYTOCHROME_B5_2"/>
    <property type="match status" value="1"/>
</dbReference>
<sequence length="129" mass="14252">MAEKTITVEEVLKHNTRDDLYIVVKDKVYDISKFLDAHPGGEEVLVDLAGRDASGPFEDVGHSEDAQELLEKFYIGNLLRTEDGPQLPTTGAAAGGSGYDSSQPVKPAMWLFVLVMVVAYFAFRKYVLK</sequence>
<gene>
    <name type="primary">oca8</name>
    <name type="ORF">SPCC16A11.10c</name>
</gene>
<reference key="1">
    <citation type="journal article" date="2002" name="Nature">
        <title>The genome sequence of Schizosaccharomyces pombe.</title>
        <authorList>
            <person name="Wood V."/>
            <person name="Gwilliam R."/>
            <person name="Rajandream M.A."/>
            <person name="Lyne M.H."/>
            <person name="Lyne R."/>
            <person name="Stewart A."/>
            <person name="Sgouros J.G."/>
            <person name="Peat N."/>
            <person name="Hayles J."/>
            <person name="Baker S.G."/>
            <person name="Basham D."/>
            <person name="Bowman S."/>
            <person name="Brooks K."/>
            <person name="Brown D."/>
            <person name="Brown S."/>
            <person name="Chillingworth T."/>
            <person name="Churcher C.M."/>
            <person name="Collins M."/>
            <person name="Connor R."/>
            <person name="Cronin A."/>
            <person name="Davis P."/>
            <person name="Feltwell T."/>
            <person name="Fraser A."/>
            <person name="Gentles S."/>
            <person name="Goble A."/>
            <person name="Hamlin N."/>
            <person name="Harris D.E."/>
            <person name="Hidalgo J."/>
            <person name="Hodgson G."/>
            <person name="Holroyd S."/>
            <person name="Hornsby T."/>
            <person name="Howarth S."/>
            <person name="Huckle E.J."/>
            <person name="Hunt S."/>
            <person name="Jagels K."/>
            <person name="James K.D."/>
            <person name="Jones L."/>
            <person name="Jones M."/>
            <person name="Leather S."/>
            <person name="McDonald S."/>
            <person name="McLean J."/>
            <person name="Mooney P."/>
            <person name="Moule S."/>
            <person name="Mungall K.L."/>
            <person name="Murphy L.D."/>
            <person name="Niblett D."/>
            <person name="Odell C."/>
            <person name="Oliver K."/>
            <person name="O'Neil S."/>
            <person name="Pearson D."/>
            <person name="Quail M.A."/>
            <person name="Rabbinowitsch E."/>
            <person name="Rutherford K.M."/>
            <person name="Rutter S."/>
            <person name="Saunders D."/>
            <person name="Seeger K."/>
            <person name="Sharp S."/>
            <person name="Skelton J."/>
            <person name="Simmonds M.N."/>
            <person name="Squares R."/>
            <person name="Squares S."/>
            <person name="Stevens K."/>
            <person name="Taylor K."/>
            <person name="Taylor R.G."/>
            <person name="Tivey A."/>
            <person name="Walsh S.V."/>
            <person name="Warren T."/>
            <person name="Whitehead S."/>
            <person name="Woodward J.R."/>
            <person name="Volckaert G."/>
            <person name="Aert R."/>
            <person name="Robben J."/>
            <person name="Grymonprez B."/>
            <person name="Weltjens I."/>
            <person name="Vanstreels E."/>
            <person name="Rieger M."/>
            <person name="Schaefer M."/>
            <person name="Mueller-Auer S."/>
            <person name="Gabel C."/>
            <person name="Fuchs M."/>
            <person name="Duesterhoeft A."/>
            <person name="Fritzc C."/>
            <person name="Holzer E."/>
            <person name="Moestl D."/>
            <person name="Hilbert H."/>
            <person name="Borzym K."/>
            <person name="Langer I."/>
            <person name="Beck A."/>
            <person name="Lehrach H."/>
            <person name="Reinhardt R."/>
            <person name="Pohl T.M."/>
            <person name="Eger P."/>
            <person name="Zimmermann W."/>
            <person name="Wedler H."/>
            <person name="Wambutt R."/>
            <person name="Purnelle B."/>
            <person name="Goffeau A."/>
            <person name="Cadieu E."/>
            <person name="Dreano S."/>
            <person name="Gloux S."/>
            <person name="Lelaure V."/>
            <person name="Mottier S."/>
            <person name="Galibert F."/>
            <person name="Aves S.J."/>
            <person name="Xiang Z."/>
            <person name="Hunt C."/>
            <person name="Moore K."/>
            <person name="Hurst S.M."/>
            <person name="Lucas M."/>
            <person name="Rochet M."/>
            <person name="Gaillardin C."/>
            <person name="Tallada V.A."/>
            <person name="Garzon A."/>
            <person name="Thode G."/>
            <person name="Daga R.R."/>
            <person name="Cruzado L."/>
            <person name="Jimenez J."/>
            <person name="Sanchez M."/>
            <person name="del Rey F."/>
            <person name="Benito J."/>
            <person name="Dominguez A."/>
            <person name="Revuelta J.L."/>
            <person name="Moreno S."/>
            <person name="Armstrong J."/>
            <person name="Forsburg S.L."/>
            <person name="Cerutti L."/>
            <person name="Lowe T."/>
            <person name="McCombie W.R."/>
            <person name="Paulsen I."/>
            <person name="Potashkin J."/>
            <person name="Shpakovski G.V."/>
            <person name="Ussery D."/>
            <person name="Barrell B.G."/>
            <person name="Nurse P."/>
        </authorList>
    </citation>
    <scope>NUCLEOTIDE SEQUENCE [LARGE SCALE GENOMIC DNA]</scope>
    <source>
        <strain>972 / ATCC 24843</strain>
    </source>
</reference>
<reference key="2">
    <citation type="journal article" date="2006" name="Nat. Biotechnol.">
        <title>ORFeome cloning and global analysis of protein localization in the fission yeast Schizosaccharomyces pombe.</title>
        <authorList>
            <person name="Matsuyama A."/>
            <person name="Arai R."/>
            <person name="Yashiroda Y."/>
            <person name="Shirai A."/>
            <person name="Kamata A."/>
            <person name="Sekido S."/>
            <person name="Kobayashi Y."/>
            <person name="Hashimoto A."/>
            <person name="Hamamoto M."/>
            <person name="Hiraoka Y."/>
            <person name="Horinouchi S."/>
            <person name="Yoshida M."/>
        </authorList>
    </citation>
    <scope>SUBCELLULAR LOCATION [LARGE SCALE ANALYSIS]</scope>
</reference>
<organism>
    <name type="scientific">Schizosaccharomyces pombe (strain 972 / ATCC 24843)</name>
    <name type="common">Fission yeast</name>
    <dbReference type="NCBI Taxonomy" id="284812"/>
    <lineage>
        <taxon>Eukaryota</taxon>
        <taxon>Fungi</taxon>
        <taxon>Dikarya</taxon>
        <taxon>Ascomycota</taxon>
        <taxon>Taphrinomycotina</taxon>
        <taxon>Schizosaccharomycetes</taxon>
        <taxon>Schizosaccharomycetales</taxon>
        <taxon>Schizosaccharomycetaceae</taxon>
        <taxon>Schizosaccharomyces</taxon>
    </lineage>
</organism>
<comment type="function">
    <text evidence="1">Membrane bound hemoprotein which function as an electron carrier for several membrane bound oxygenases.</text>
</comment>
<comment type="subcellular location">
    <subcellularLocation>
        <location evidence="1">Endoplasmic reticulum membrane</location>
        <topology evidence="1">Single-pass membrane protein</topology>
        <orientation evidence="1">Cytoplasmic side</orientation>
    </subcellularLocation>
    <subcellularLocation>
        <location evidence="1">Microsome membrane</location>
        <topology evidence="1">Single-pass membrane protein</topology>
        <orientation evidence="1">Cytoplasmic side</orientation>
    </subcellularLocation>
    <subcellularLocation>
        <location evidence="4">Mitochondrion</location>
    </subcellularLocation>
</comment>
<comment type="similarity">
    <text evidence="5">Belongs to the cytochrome b5 family.</text>
</comment>
<evidence type="ECO:0000250" key="1"/>
<evidence type="ECO:0000255" key="2"/>
<evidence type="ECO:0000255" key="3">
    <source>
        <dbReference type="PROSITE-ProRule" id="PRU00279"/>
    </source>
</evidence>
<evidence type="ECO:0000269" key="4">
    <source>
    </source>
</evidence>
<evidence type="ECO:0000305" key="5"/>
<protein>
    <recommendedName>
        <fullName>Probable cytochrome b5 2</fullName>
    </recommendedName>
</protein>
<keyword id="KW-0249">Electron transport</keyword>
<keyword id="KW-0256">Endoplasmic reticulum</keyword>
<keyword id="KW-0349">Heme</keyword>
<keyword id="KW-0408">Iron</keyword>
<keyword id="KW-0472">Membrane</keyword>
<keyword id="KW-0479">Metal-binding</keyword>
<keyword id="KW-0492">Microsome</keyword>
<keyword id="KW-0496">Mitochondrion</keyword>
<keyword id="KW-1185">Reference proteome</keyword>
<keyword id="KW-0812">Transmembrane</keyword>
<keyword id="KW-1133">Transmembrane helix</keyword>
<keyword id="KW-0813">Transport</keyword>
<accession>Q9USM6</accession>
<name>CYB52_SCHPO</name>
<proteinExistence type="inferred from homology"/>
<feature type="chain" id="PRO_0000166034" description="Probable cytochrome b5 2">
    <location>
        <begin position="1"/>
        <end position="129"/>
    </location>
</feature>
<feature type="transmembrane region" description="Helical" evidence="2">
    <location>
        <begin position="105"/>
        <end position="125"/>
    </location>
</feature>
<feature type="domain" description="Cytochrome b5 heme-binding" evidence="3">
    <location>
        <begin position="3"/>
        <end position="79"/>
    </location>
</feature>
<feature type="binding site" description="axial binding residue" evidence="3">
    <location>
        <position position="38"/>
    </location>
    <ligand>
        <name>heme</name>
        <dbReference type="ChEBI" id="CHEBI:30413"/>
    </ligand>
    <ligandPart>
        <name>Fe</name>
        <dbReference type="ChEBI" id="CHEBI:18248"/>
    </ligandPart>
</feature>
<feature type="binding site" description="axial binding residue" evidence="3">
    <location>
        <position position="62"/>
    </location>
    <ligand>
        <name>heme</name>
        <dbReference type="ChEBI" id="CHEBI:30413"/>
    </ligand>
    <ligandPart>
        <name>Fe</name>
        <dbReference type="ChEBI" id="CHEBI:18248"/>
    </ligandPart>
</feature>